<proteinExistence type="inferred from homology"/>
<gene>
    <name evidence="1" type="primary">nagZ</name>
    <name type="ordered locus">CGSHiEE_07165</name>
</gene>
<name>NAGZ_HAEIE</name>
<keyword id="KW-0131">Cell cycle</keyword>
<keyword id="KW-0132">Cell division</keyword>
<keyword id="KW-0133">Cell shape</keyword>
<keyword id="KW-0961">Cell wall biogenesis/degradation</keyword>
<keyword id="KW-0963">Cytoplasm</keyword>
<keyword id="KW-0326">Glycosidase</keyword>
<keyword id="KW-0378">Hydrolase</keyword>
<keyword id="KW-0573">Peptidoglycan synthesis</keyword>
<dbReference type="EC" id="3.2.1.52" evidence="1"/>
<dbReference type="EMBL" id="CP000671">
    <property type="protein sequence ID" value="ABQ98760.1"/>
    <property type="molecule type" value="Genomic_DNA"/>
</dbReference>
<dbReference type="SMR" id="A5UDA9"/>
<dbReference type="CAZy" id="GH3">
    <property type="family name" value="Glycoside Hydrolase Family 3"/>
</dbReference>
<dbReference type="KEGG" id="hip:CGSHiEE_07165"/>
<dbReference type="HOGENOM" id="CLU_008392_0_0_6"/>
<dbReference type="UniPathway" id="UPA00544"/>
<dbReference type="GO" id="GO:0005737">
    <property type="term" value="C:cytoplasm"/>
    <property type="evidence" value="ECO:0007669"/>
    <property type="project" value="UniProtKB-SubCell"/>
</dbReference>
<dbReference type="GO" id="GO:0004563">
    <property type="term" value="F:beta-N-acetylhexosaminidase activity"/>
    <property type="evidence" value="ECO:0007669"/>
    <property type="project" value="UniProtKB-UniRule"/>
</dbReference>
<dbReference type="GO" id="GO:0005975">
    <property type="term" value="P:carbohydrate metabolic process"/>
    <property type="evidence" value="ECO:0007669"/>
    <property type="project" value="InterPro"/>
</dbReference>
<dbReference type="GO" id="GO:0051301">
    <property type="term" value="P:cell division"/>
    <property type="evidence" value="ECO:0007669"/>
    <property type="project" value="UniProtKB-KW"/>
</dbReference>
<dbReference type="GO" id="GO:0071555">
    <property type="term" value="P:cell wall organization"/>
    <property type="evidence" value="ECO:0007669"/>
    <property type="project" value="UniProtKB-KW"/>
</dbReference>
<dbReference type="GO" id="GO:0009252">
    <property type="term" value="P:peptidoglycan biosynthetic process"/>
    <property type="evidence" value="ECO:0007669"/>
    <property type="project" value="UniProtKB-KW"/>
</dbReference>
<dbReference type="GO" id="GO:0009254">
    <property type="term" value="P:peptidoglycan turnover"/>
    <property type="evidence" value="ECO:0007669"/>
    <property type="project" value="UniProtKB-UniRule"/>
</dbReference>
<dbReference type="GO" id="GO:0008360">
    <property type="term" value="P:regulation of cell shape"/>
    <property type="evidence" value="ECO:0007669"/>
    <property type="project" value="UniProtKB-KW"/>
</dbReference>
<dbReference type="FunFam" id="3.20.20.300:FF:000001">
    <property type="entry name" value="Beta-hexosaminidase"/>
    <property type="match status" value="1"/>
</dbReference>
<dbReference type="Gene3D" id="3.20.20.300">
    <property type="entry name" value="Glycoside hydrolase, family 3, N-terminal domain"/>
    <property type="match status" value="1"/>
</dbReference>
<dbReference type="HAMAP" id="MF_00364">
    <property type="entry name" value="NagZ"/>
    <property type="match status" value="1"/>
</dbReference>
<dbReference type="InterPro" id="IPR022956">
    <property type="entry name" value="Beta_hexosaminidase_bac"/>
</dbReference>
<dbReference type="InterPro" id="IPR019800">
    <property type="entry name" value="Glyco_hydro_3_AS"/>
</dbReference>
<dbReference type="InterPro" id="IPR001764">
    <property type="entry name" value="Glyco_hydro_3_N"/>
</dbReference>
<dbReference type="InterPro" id="IPR036962">
    <property type="entry name" value="Glyco_hydro_3_N_sf"/>
</dbReference>
<dbReference type="InterPro" id="IPR017853">
    <property type="entry name" value="Glycoside_hydrolase_SF"/>
</dbReference>
<dbReference type="InterPro" id="IPR050226">
    <property type="entry name" value="NagZ_Beta-hexosaminidase"/>
</dbReference>
<dbReference type="NCBIfam" id="NF003740">
    <property type="entry name" value="PRK05337.1"/>
    <property type="match status" value="1"/>
</dbReference>
<dbReference type="PANTHER" id="PTHR30480:SF13">
    <property type="entry name" value="BETA-HEXOSAMINIDASE"/>
    <property type="match status" value="1"/>
</dbReference>
<dbReference type="PANTHER" id="PTHR30480">
    <property type="entry name" value="BETA-HEXOSAMINIDASE-RELATED"/>
    <property type="match status" value="1"/>
</dbReference>
<dbReference type="Pfam" id="PF00933">
    <property type="entry name" value="Glyco_hydro_3"/>
    <property type="match status" value="1"/>
</dbReference>
<dbReference type="SUPFAM" id="SSF51445">
    <property type="entry name" value="(Trans)glycosidases"/>
    <property type="match status" value="1"/>
</dbReference>
<dbReference type="PROSITE" id="PS00775">
    <property type="entry name" value="GLYCOSYL_HYDROL_F3"/>
    <property type="match status" value="1"/>
</dbReference>
<reference key="1">
    <citation type="journal article" date="2007" name="Genome Biol.">
        <title>Characterization and modeling of the Haemophilus influenzae core and supragenomes based on the complete genomic sequences of Rd and 12 clinical nontypeable strains.</title>
        <authorList>
            <person name="Hogg J.S."/>
            <person name="Hu F.Z."/>
            <person name="Janto B."/>
            <person name="Boissy R."/>
            <person name="Hayes J."/>
            <person name="Keefe R."/>
            <person name="Post J.C."/>
            <person name="Ehrlich G.D."/>
        </authorList>
    </citation>
    <scope>NUCLEOTIDE SEQUENCE [LARGE SCALE GENOMIC DNA]</scope>
    <source>
        <strain>PittEE</strain>
    </source>
</reference>
<accession>A5UDA9</accession>
<organism>
    <name type="scientific">Haemophilus influenzae (strain PittEE)</name>
    <dbReference type="NCBI Taxonomy" id="374930"/>
    <lineage>
        <taxon>Bacteria</taxon>
        <taxon>Pseudomonadati</taxon>
        <taxon>Pseudomonadota</taxon>
        <taxon>Gammaproteobacteria</taxon>
        <taxon>Pasteurellales</taxon>
        <taxon>Pasteurellaceae</taxon>
        <taxon>Haemophilus</taxon>
    </lineage>
</organism>
<evidence type="ECO:0000255" key="1">
    <source>
        <dbReference type="HAMAP-Rule" id="MF_00364"/>
    </source>
</evidence>
<feature type="chain" id="PRO_1000005654" description="Beta-hexosaminidase">
    <location>
        <begin position="1"/>
        <end position="350"/>
    </location>
</feature>
<feature type="active site" description="Proton donor/acceptor" evidence="1">
    <location>
        <position position="176"/>
    </location>
</feature>
<feature type="active site" description="Nucleophile" evidence="1">
    <location>
        <position position="248"/>
    </location>
</feature>
<feature type="binding site" evidence="1">
    <location>
        <position position="62"/>
    </location>
    <ligand>
        <name>substrate</name>
    </ligand>
</feature>
<feature type="binding site" evidence="1">
    <location>
        <position position="70"/>
    </location>
    <ligand>
        <name>substrate</name>
    </ligand>
</feature>
<feature type="binding site" evidence="1">
    <location>
        <position position="133"/>
    </location>
    <ligand>
        <name>substrate</name>
    </ligand>
</feature>
<feature type="binding site" evidence="1">
    <location>
        <begin position="163"/>
        <end position="164"/>
    </location>
    <ligand>
        <name>substrate</name>
    </ligand>
</feature>
<feature type="site" description="Important for catalytic activity" evidence="1">
    <location>
        <position position="174"/>
    </location>
</feature>
<sequence>MSTLLIDLKGKELEQEEVELLSHPLVAGLILFTRNFEDREQIQELIRSVRQRVKKPLLITVDQEGGRVQRFRDGFTMLPSMQAFQETLSATEQVSFAKEAGWQMAAEMIALDIDLSFAPVLDLGHECRAIGDRSFSSDVKSAVNLAINFIDGMHQAGMASTGKHFPGHGHVLADSHLETPYDDRTKDEIFGCDLQPFQQLIAQNKLDAIMPAHVIYSQCDSQPASGSEYWLKEILRKKLNFQGTIFSDDLGMKGAGVMGNFVERSKKALNAGCDLLLLCNEREGVIQVVDNLKLAKNQPHFMARQARLQNLFKRRVIDWNDLVSDLRWKLNYRNLADIQIRWLDIQAAKK</sequence>
<comment type="function">
    <text evidence="1">Plays a role in peptidoglycan recycling by cleaving the terminal beta-1,4-linked N-acetylglucosamine (GlcNAc) from peptide-linked peptidoglycan fragments, giving rise to free GlcNAc, anhydro-N-acetylmuramic acid and anhydro-N-acetylmuramic acid-linked peptides.</text>
</comment>
<comment type="catalytic activity">
    <reaction evidence="1">
        <text>Hydrolysis of terminal non-reducing N-acetyl-D-hexosamine residues in N-acetyl-beta-D-hexosaminides.</text>
        <dbReference type="EC" id="3.2.1.52"/>
    </reaction>
</comment>
<comment type="pathway">
    <text evidence="1">Cell wall biogenesis; peptidoglycan recycling.</text>
</comment>
<comment type="subcellular location">
    <subcellularLocation>
        <location evidence="1">Cytoplasm</location>
    </subcellularLocation>
</comment>
<comment type="similarity">
    <text evidence="1">Belongs to the glycosyl hydrolase 3 family. NagZ subfamily.</text>
</comment>
<protein>
    <recommendedName>
        <fullName evidence="1">Beta-hexosaminidase</fullName>
        <ecNumber evidence="1">3.2.1.52</ecNumber>
    </recommendedName>
    <alternativeName>
        <fullName evidence="1">Beta-N-acetylhexosaminidase</fullName>
    </alternativeName>
    <alternativeName>
        <fullName evidence="1">N-acetyl-beta-glucosaminidase</fullName>
    </alternativeName>
</protein>